<accession>Q7U605</accession>
<dbReference type="EMBL" id="BX569693">
    <property type="protein sequence ID" value="CAE08051.1"/>
    <property type="molecule type" value="Genomic_DNA"/>
</dbReference>
<dbReference type="RefSeq" id="WP_011128400.1">
    <property type="nucleotide sequence ID" value="NC_005070.1"/>
</dbReference>
<dbReference type="SMR" id="Q7U605"/>
<dbReference type="STRING" id="84588.SYNW1536"/>
<dbReference type="KEGG" id="syw:SYNW1536"/>
<dbReference type="eggNOG" id="COG0593">
    <property type="taxonomic scope" value="Bacteria"/>
</dbReference>
<dbReference type="HOGENOM" id="CLU_026910_3_1_3"/>
<dbReference type="Proteomes" id="UP000001422">
    <property type="component" value="Chromosome"/>
</dbReference>
<dbReference type="GO" id="GO:0005737">
    <property type="term" value="C:cytoplasm"/>
    <property type="evidence" value="ECO:0007669"/>
    <property type="project" value="UniProtKB-SubCell"/>
</dbReference>
<dbReference type="GO" id="GO:0005886">
    <property type="term" value="C:plasma membrane"/>
    <property type="evidence" value="ECO:0007669"/>
    <property type="project" value="TreeGrafter"/>
</dbReference>
<dbReference type="GO" id="GO:0005524">
    <property type="term" value="F:ATP binding"/>
    <property type="evidence" value="ECO:0007669"/>
    <property type="project" value="UniProtKB-UniRule"/>
</dbReference>
<dbReference type="GO" id="GO:0016887">
    <property type="term" value="F:ATP hydrolysis activity"/>
    <property type="evidence" value="ECO:0007669"/>
    <property type="project" value="InterPro"/>
</dbReference>
<dbReference type="GO" id="GO:0003688">
    <property type="term" value="F:DNA replication origin binding"/>
    <property type="evidence" value="ECO:0007669"/>
    <property type="project" value="UniProtKB-UniRule"/>
</dbReference>
<dbReference type="GO" id="GO:0008289">
    <property type="term" value="F:lipid binding"/>
    <property type="evidence" value="ECO:0007669"/>
    <property type="project" value="UniProtKB-KW"/>
</dbReference>
<dbReference type="GO" id="GO:0006270">
    <property type="term" value="P:DNA replication initiation"/>
    <property type="evidence" value="ECO:0007669"/>
    <property type="project" value="UniProtKB-UniRule"/>
</dbReference>
<dbReference type="GO" id="GO:0006275">
    <property type="term" value="P:regulation of DNA replication"/>
    <property type="evidence" value="ECO:0007669"/>
    <property type="project" value="UniProtKB-UniRule"/>
</dbReference>
<dbReference type="CDD" id="cd00009">
    <property type="entry name" value="AAA"/>
    <property type="match status" value="1"/>
</dbReference>
<dbReference type="CDD" id="cd06571">
    <property type="entry name" value="Bac_DnaA_C"/>
    <property type="match status" value="1"/>
</dbReference>
<dbReference type="FunFam" id="3.40.50.300:FF:000668">
    <property type="entry name" value="Chromosomal replication initiator protein DnaA"/>
    <property type="match status" value="1"/>
</dbReference>
<dbReference type="Gene3D" id="1.10.1750.10">
    <property type="match status" value="1"/>
</dbReference>
<dbReference type="Gene3D" id="1.10.8.60">
    <property type="match status" value="1"/>
</dbReference>
<dbReference type="Gene3D" id="3.30.300.180">
    <property type="match status" value="1"/>
</dbReference>
<dbReference type="Gene3D" id="3.40.50.300">
    <property type="entry name" value="P-loop containing nucleotide triphosphate hydrolases"/>
    <property type="match status" value="1"/>
</dbReference>
<dbReference type="HAMAP" id="MF_00377">
    <property type="entry name" value="DnaA_bact"/>
    <property type="match status" value="1"/>
</dbReference>
<dbReference type="InterPro" id="IPR003593">
    <property type="entry name" value="AAA+_ATPase"/>
</dbReference>
<dbReference type="InterPro" id="IPR001957">
    <property type="entry name" value="Chromosome_initiator_DnaA"/>
</dbReference>
<dbReference type="InterPro" id="IPR020591">
    <property type="entry name" value="Chromosome_initiator_DnaA-like"/>
</dbReference>
<dbReference type="InterPro" id="IPR018312">
    <property type="entry name" value="Chromosome_initiator_DnaA_CS"/>
</dbReference>
<dbReference type="InterPro" id="IPR013159">
    <property type="entry name" value="DnaA_C"/>
</dbReference>
<dbReference type="InterPro" id="IPR013317">
    <property type="entry name" value="DnaA_dom"/>
</dbReference>
<dbReference type="InterPro" id="IPR024633">
    <property type="entry name" value="DnaA_N_dom"/>
</dbReference>
<dbReference type="InterPro" id="IPR038454">
    <property type="entry name" value="DnaA_N_sf"/>
</dbReference>
<dbReference type="InterPro" id="IPR027417">
    <property type="entry name" value="P-loop_NTPase"/>
</dbReference>
<dbReference type="InterPro" id="IPR010921">
    <property type="entry name" value="Trp_repressor/repl_initiator"/>
</dbReference>
<dbReference type="NCBIfam" id="TIGR00362">
    <property type="entry name" value="DnaA"/>
    <property type="match status" value="1"/>
</dbReference>
<dbReference type="PANTHER" id="PTHR30050">
    <property type="entry name" value="CHROMOSOMAL REPLICATION INITIATOR PROTEIN DNAA"/>
    <property type="match status" value="1"/>
</dbReference>
<dbReference type="PANTHER" id="PTHR30050:SF2">
    <property type="entry name" value="CHROMOSOMAL REPLICATION INITIATOR PROTEIN DNAA"/>
    <property type="match status" value="1"/>
</dbReference>
<dbReference type="Pfam" id="PF00308">
    <property type="entry name" value="Bac_DnaA"/>
    <property type="match status" value="1"/>
</dbReference>
<dbReference type="Pfam" id="PF08299">
    <property type="entry name" value="Bac_DnaA_C"/>
    <property type="match status" value="1"/>
</dbReference>
<dbReference type="Pfam" id="PF11638">
    <property type="entry name" value="DnaA_N"/>
    <property type="match status" value="1"/>
</dbReference>
<dbReference type="PRINTS" id="PR00051">
    <property type="entry name" value="DNAA"/>
</dbReference>
<dbReference type="SMART" id="SM00382">
    <property type="entry name" value="AAA"/>
    <property type="match status" value="1"/>
</dbReference>
<dbReference type="SMART" id="SM00760">
    <property type="entry name" value="Bac_DnaA_C"/>
    <property type="match status" value="1"/>
</dbReference>
<dbReference type="SUPFAM" id="SSF52540">
    <property type="entry name" value="P-loop containing nucleoside triphosphate hydrolases"/>
    <property type="match status" value="1"/>
</dbReference>
<dbReference type="SUPFAM" id="SSF48295">
    <property type="entry name" value="TrpR-like"/>
    <property type="match status" value="1"/>
</dbReference>
<dbReference type="PROSITE" id="PS01008">
    <property type="entry name" value="DNAA"/>
    <property type="match status" value="1"/>
</dbReference>
<protein>
    <recommendedName>
        <fullName evidence="1">Chromosomal replication initiator protein DnaA</fullName>
    </recommendedName>
</protein>
<gene>
    <name evidence="1" type="primary">dnaA</name>
    <name type="ordered locus">SYNW1536</name>
</gene>
<name>DNAA_PARMW</name>
<proteinExistence type="inferred from homology"/>
<evidence type="ECO:0000255" key="1">
    <source>
        <dbReference type="HAMAP-Rule" id="MF_00377"/>
    </source>
</evidence>
<evidence type="ECO:0000256" key="2">
    <source>
        <dbReference type="SAM" id="MobiDB-lite"/>
    </source>
</evidence>
<keyword id="KW-0067">ATP-binding</keyword>
<keyword id="KW-0963">Cytoplasm</keyword>
<keyword id="KW-0235">DNA replication</keyword>
<keyword id="KW-0238">DNA-binding</keyword>
<keyword id="KW-0446">Lipid-binding</keyword>
<keyword id="KW-0547">Nucleotide-binding</keyword>
<reference key="1">
    <citation type="journal article" date="2003" name="Nature">
        <title>The genome of a motile marine Synechococcus.</title>
        <authorList>
            <person name="Palenik B."/>
            <person name="Brahamsha B."/>
            <person name="Larimer F.W."/>
            <person name="Land M.L."/>
            <person name="Hauser L."/>
            <person name="Chain P."/>
            <person name="Lamerdin J.E."/>
            <person name="Regala W."/>
            <person name="Allen E.E."/>
            <person name="McCarren J."/>
            <person name="Paulsen I.T."/>
            <person name="Dufresne A."/>
            <person name="Partensky F."/>
            <person name="Webb E.A."/>
            <person name="Waterbury J."/>
        </authorList>
    </citation>
    <scope>NUCLEOTIDE SEQUENCE [LARGE SCALE GENOMIC DNA]</scope>
    <source>
        <strain>WH8102</strain>
    </source>
</reference>
<feature type="chain" id="PRO_0000114284" description="Chromosomal replication initiator protein DnaA">
    <location>
        <begin position="1"/>
        <end position="465"/>
    </location>
</feature>
<feature type="region of interest" description="Domain I, interacts with DnaA modulators" evidence="1">
    <location>
        <begin position="1"/>
        <end position="81"/>
    </location>
</feature>
<feature type="region of interest" description="Domain II" evidence="1">
    <location>
        <begin position="81"/>
        <end position="124"/>
    </location>
</feature>
<feature type="region of interest" description="Disordered" evidence="2">
    <location>
        <begin position="89"/>
        <end position="122"/>
    </location>
</feature>
<feature type="region of interest" description="Domain III, AAA+ region" evidence="1">
    <location>
        <begin position="125"/>
        <end position="341"/>
    </location>
</feature>
<feature type="region of interest" description="Domain IV, binds dsDNA" evidence="1">
    <location>
        <begin position="342"/>
        <end position="465"/>
    </location>
</feature>
<feature type="compositionally biased region" description="Low complexity" evidence="2">
    <location>
        <begin position="107"/>
        <end position="117"/>
    </location>
</feature>
<feature type="binding site" evidence="1">
    <location>
        <position position="169"/>
    </location>
    <ligand>
        <name>ATP</name>
        <dbReference type="ChEBI" id="CHEBI:30616"/>
    </ligand>
</feature>
<feature type="binding site" evidence="1">
    <location>
        <position position="171"/>
    </location>
    <ligand>
        <name>ATP</name>
        <dbReference type="ChEBI" id="CHEBI:30616"/>
    </ligand>
</feature>
<feature type="binding site" evidence="1">
    <location>
        <position position="172"/>
    </location>
    <ligand>
        <name>ATP</name>
        <dbReference type="ChEBI" id="CHEBI:30616"/>
    </ligand>
</feature>
<feature type="binding site" evidence="1">
    <location>
        <position position="173"/>
    </location>
    <ligand>
        <name>ATP</name>
        <dbReference type="ChEBI" id="CHEBI:30616"/>
    </ligand>
</feature>
<organism>
    <name type="scientific">Parasynechococcus marenigrum (strain WH8102)</name>
    <dbReference type="NCBI Taxonomy" id="84588"/>
    <lineage>
        <taxon>Bacteria</taxon>
        <taxon>Bacillati</taxon>
        <taxon>Cyanobacteriota</taxon>
        <taxon>Cyanophyceae</taxon>
        <taxon>Synechococcales</taxon>
        <taxon>Prochlorococcaceae</taxon>
        <taxon>Parasynechococcus</taxon>
        <taxon>Parasynechococcus marenigrum</taxon>
    </lineage>
</organism>
<sequence>MVLTGEELWSKVREGLQTKLSKPTFETFIRPTACSGFANGELRLLAPNPFAGVRLREQLLPSITQLASEACGGPVQVVVLADSAVVSPGVTNQDADPPEPASAPGDSAAARESAPSRSPRRVLPGLNPRYVFGRFVVGPNSRMAHAAALAVAEAPGREFNPLFICGGVGLGKTHLMQAIGHYRLEIDPSARVSYVSTETFTNDLIDSIRKDGMKAFRDRYRAADLLLVDDIQFIEGKEYTQEEFFHTFNALHEAGKQVVIASDRPPSQISRLQQRLISRFQMGLIADIQAPDLETRMAILQKKAEQERMALPRDLIHYLAGRFTSNIRELEGALTRAVAFASITGLPMTVESVAPMLDPTGQGVDVTPQQVIDKVSEVFDVTAEEMLSSTRRRAVSQARQVGMYLMRQGTDLSLPRIGDTFGGKDHTTVMYAIEQVEKKLASDPQLAGQVQKVKDLLQIDSRRKR</sequence>
<comment type="function">
    <text evidence="1">Plays an essential role in the initiation and regulation of chromosomal replication. ATP-DnaA binds to the origin of replication (oriC) to initiate formation of the DNA replication initiation complex once per cell cycle. Binds the DnaA box (a 9 base pair repeat at the origin) and separates the double-stranded (ds)DNA. Forms a right-handed helical filament on oriC DNA; dsDNA binds to the exterior of the filament while single-stranded (ss)DNA is stabiized in the filament's interior. The ATP-DnaA-oriC complex binds and stabilizes one strand of the AT-rich DNA unwinding element (DUE), permitting loading of DNA polymerase. After initiation quickly degrades to an ADP-DnaA complex that is not apt for DNA replication. Binds acidic phospholipids.</text>
</comment>
<comment type="subunit">
    <text evidence="1">Oligomerizes as a right-handed, spiral filament on DNA at oriC.</text>
</comment>
<comment type="subcellular location">
    <subcellularLocation>
        <location evidence="1">Cytoplasm</location>
    </subcellularLocation>
</comment>
<comment type="domain">
    <text evidence="1">Domain I is involved in oligomerization and binding regulators, domain II is flexibile and of varying length in different bacteria, domain III forms the AAA+ region, while domain IV binds dsDNA.</text>
</comment>
<comment type="similarity">
    <text evidence="1">Belongs to the DnaA family.</text>
</comment>